<dbReference type="EC" id="2.7.7.6" evidence="1"/>
<dbReference type="EMBL" id="AE004437">
    <property type="protein sequence ID" value="AAG19525.1"/>
    <property type="molecule type" value="Genomic_DNA"/>
</dbReference>
<dbReference type="PIR" id="A84270">
    <property type="entry name" value="A84270"/>
</dbReference>
<dbReference type="RefSeq" id="WP_010902820.1">
    <property type="nucleotide sequence ID" value="NC_002607.1"/>
</dbReference>
<dbReference type="SMR" id="Q9HQJ0"/>
<dbReference type="STRING" id="64091.VNG_1141G"/>
<dbReference type="PaxDb" id="64091-VNG_1141G"/>
<dbReference type="KEGG" id="hal:VNG_1141G"/>
<dbReference type="PATRIC" id="fig|64091.14.peg.871"/>
<dbReference type="HOGENOM" id="CLU_112527_5_0_2"/>
<dbReference type="InParanoid" id="Q9HQJ0"/>
<dbReference type="OrthoDB" id="10567at2157"/>
<dbReference type="PhylomeDB" id="Q9HQJ0"/>
<dbReference type="Proteomes" id="UP000000554">
    <property type="component" value="Chromosome"/>
</dbReference>
<dbReference type="GO" id="GO:0005737">
    <property type="term" value="C:cytoplasm"/>
    <property type="evidence" value="ECO:0007669"/>
    <property type="project" value="UniProtKB-SubCell"/>
</dbReference>
<dbReference type="GO" id="GO:0000428">
    <property type="term" value="C:DNA-directed RNA polymerase complex"/>
    <property type="evidence" value="ECO:0007669"/>
    <property type="project" value="UniProtKB-KW"/>
</dbReference>
<dbReference type="GO" id="GO:0003677">
    <property type="term" value="F:DNA binding"/>
    <property type="evidence" value="ECO:0007669"/>
    <property type="project" value="UniProtKB-UniRule"/>
</dbReference>
<dbReference type="GO" id="GO:0003899">
    <property type="term" value="F:DNA-directed RNA polymerase activity"/>
    <property type="evidence" value="ECO:0007669"/>
    <property type="project" value="UniProtKB-UniRule"/>
</dbReference>
<dbReference type="GO" id="GO:0006351">
    <property type="term" value="P:DNA-templated transcription"/>
    <property type="evidence" value="ECO:0007669"/>
    <property type="project" value="UniProtKB-UniRule"/>
</dbReference>
<dbReference type="Gene3D" id="3.90.940.10">
    <property type="match status" value="1"/>
</dbReference>
<dbReference type="HAMAP" id="MF_00192">
    <property type="entry name" value="RNApol_arch_Rpo6"/>
    <property type="match status" value="1"/>
</dbReference>
<dbReference type="InterPro" id="IPR020708">
    <property type="entry name" value="DNA-dir_RNA_polK_14-18kDa_CS"/>
</dbReference>
<dbReference type="InterPro" id="IPR006110">
    <property type="entry name" value="Pol_omega/Rpo6/RPB6"/>
</dbReference>
<dbReference type="InterPro" id="IPR036161">
    <property type="entry name" value="RPB6/omega-like_sf"/>
</dbReference>
<dbReference type="InterPro" id="IPR006111">
    <property type="entry name" value="Rpo6/Rpb6"/>
</dbReference>
<dbReference type="NCBIfam" id="NF002208">
    <property type="entry name" value="PRK01099.1-3"/>
    <property type="match status" value="1"/>
</dbReference>
<dbReference type="PANTHER" id="PTHR47227">
    <property type="entry name" value="DNA-DIRECTED RNA POLYMERASE SUBUNIT K"/>
    <property type="match status" value="1"/>
</dbReference>
<dbReference type="PANTHER" id="PTHR47227:SF5">
    <property type="entry name" value="DNA-DIRECTED RNA POLYMERASES I, II, AND III SUBUNIT RPABC2"/>
    <property type="match status" value="1"/>
</dbReference>
<dbReference type="Pfam" id="PF01192">
    <property type="entry name" value="RNA_pol_Rpb6"/>
    <property type="match status" value="1"/>
</dbReference>
<dbReference type="PIRSF" id="PIRSF000778">
    <property type="entry name" value="RpoK/RPB6"/>
    <property type="match status" value="1"/>
</dbReference>
<dbReference type="SUPFAM" id="SSF63562">
    <property type="entry name" value="RPB6/omega subunit-like"/>
    <property type="match status" value="1"/>
</dbReference>
<dbReference type="PROSITE" id="PS01111">
    <property type="entry name" value="RNA_POL_K_14KD"/>
    <property type="match status" value="1"/>
</dbReference>
<accession>Q9HQJ0</accession>
<keyword id="KW-0963">Cytoplasm</keyword>
<keyword id="KW-0240">DNA-directed RNA polymerase</keyword>
<keyword id="KW-0548">Nucleotidyltransferase</keyword>
<keyword id="KW-1185">Reference proteome</keyword>
<keyword id="KW-0804">Transcription</keyword>
<keyword id="KW-0808">Transferase</keyword>
<organism>
    <name type="scientific">Halobacterium salinarum (strain ATCC 700922 / JCM 11081 / NRC-1)</name>
    <name type="common">Halobacterium halobium</name>
    <dbReference type="NCBI Taxonomy" id="64091"/>
    <lineage>
        <taxon>Archaea</taxon>
        <taxon>Methanobacteriati</taxon>
        <taxon>Methanobacteriota</taxon>
        <taxon>Stenosarchaea group</taxon>
        <taxon>Halobacteria</taxon>
        <taxon>Halobacteriales</taxon>
        <taxon>Halobacteriaceae</taxon>
        <taxon>Halobacterium</taxon>
        <taxon>Halobacterium salinarum NRC-34001</taxon>
    </lineage>
</organism>
<evidence type="ECO:0000255" key="1">
    <source>
        <dbReference type="HAMAP-Rule" id="MF_00192"/>
    </source>
</evidence>
<comment type="function">
    <text evidence="1">DNA-dependent RNA polymerase (RNAP) catalyzes the transcription of DNA into RNA using the four ribonucleoside triphosphates as substrates.</text>
</comment>
<comment type="catalytic activity">
    <reaction evidence="1">
        <text>RNA(n) + a ribonucleoside 5'-triphosphate = RNA(n+1) + diphosphate</text>
        <dbReference type="Rhea" id="RHEA:21248"/>
        <dbReference type="Rhea" id="RHEA-COMP:14527"/>
        <dbReference type="Rhea" id="RHEA-COMP:17342"/>
        <dbReference type="ChEBI" id="CHEBI:33019"/>
        <dbReference type="ChEBI" id="CHEBI:61557"/>
        <dbReference type="ChEBI" id="CHEBI:140395"/>
        <dbReference type="EC" id="2.7.7.6"/>
    </reaction>
</comment>
<comment type="subunit">
    <text evidence="1">Part of the RNA polymerase complex.</text>
</comment>
<comment type="subcellular location">
    <subcellularLocation>
        <location evidence="1">Cytoplasm</location>
    </subcellularLocation>
</comment>
<comment type="similarity">
    <text evidence="1">Belongs to the archaeal Rpo6/eukaryotic RPB6 RNA polymerase subunit family.</text>
</comment>
<proteinExistence type="inferred from homology"/>
<sequence length="60" mass="6654">MSDSQHFSRYEKARIIGARALQVAYGAPVLVDTDQTEPILIAAEEYDADALPFTVRREGT</sequence>
<name>RPO6_HALSA</name>
<feature type="chain" id="PRO_0000133811" description="DNA-directed RNA polymerase subunit Rpo6">
    <location>
        <begin position="1"/>
        <end position="60"/>
    </location>
</feature>
<protein>
    <recommendedName>
        <fullName evidence="1">DNA-directed RNA polymerase subunit Rpo6</fullName>
        <ecNumber evidence="1">2.7.7.6</ecNumber>
    </recommendedName>
    <alternativeName>
        <fullName evidence="1">DNA-directed RNA polymerase subunit K</fullName>
    </alternativeName>
</protein>
<gene>
    <name evidence="1" type="primary">rpo6</name>
    <name evidence="1" type="synonym">rpoK</name>
    <name type="ordered locus">VNG_1141G</name>
</gene>
<reference key="1">
    <citation type="journal article" date="2000" name="Proc. Natl. Acad. Sci. U.S.A.">
        <title>Genome sequence of Halobacterium species NRC-1.</title>
        <authorList>
            <person name="Ng W.V."/>
            <person name="Kennedy S.P."/>
            <person name="Mahairas G.G."/>
            <person name="Berquist B."/>
            <person name="Pan M."/>
            <person name="Shukla H.D."/>
            <person name="Lasky S.R."/>
            <person name="Baliga N.S."/>
            <person name="Thorsson V."/>
            <person name="Sbrogna J."/>
            <person name="Swartzell S."/>
            <person name="Weir D."/>
            <person name="Hall J."/>
            <person name="Dahl T.A."/>
            <person name="Welti R."/>
            <person name="Goo Y.A."/>
            <person name="Leithauser B."/>
            <person name="Keller K."/>
            <person name="Cruz R."/>
            <person name="Danson M.J."/>
            <person name="Hough D.W."/>
            <person name="Maddocks D.G."/>
            <person name="Jablonski P.E."/>
            <person name="Krebs M.P."/>
            <person name="Angevine C.M."/>
            <person name="Dale H."/>
            <person name="Isenbarger T.A."/>
            <person name="Peck R.F."/>
            <person name="Pohlschroder M."/>
            <person name="Spudich J.L."/>
            <person name="Jung K.-H."/>
            <person name="Alam M."/>
            <person name="Freitas T."/>
            <person name="Hou S."/>
            <person name="Daniels C.J."/>
            <person name="Dennis P.P."/>
            <person name="Omer A.D."/>
            <person name="Ebhardt H."/>
            <person name="Lowe T.M."/>
            <person name="Liang P."/>
            <person name="Riley M."/>
            <person name="Hood L."/>
            <person name="DasSarma S."/>
        </authorList>
    </citation>
    <scope>NUCLEOTIDE SEQUENCE [LARGE SCALE GENOMIC DNA]</scope>
    <source>
        <strain>ATCC 700922 / JCM 11081 / NRC-1</strain>
    </source>
</reference>